<feature type="chain" id="PRO_0000384824" description="Uncharacterized protein ORF53b">
    <location>
        <begin position="1"/>
        <end position="53"/>
    </location>
</feature>
<feature type="transmembrane region" description="Helical" evidence="1">
    <location>
        <begin position="4"/>
        <end position="24"/>
    </location>
</feature>
<name>Y053B_ABVP</name>
<protein>
    <recommendedName>
        <fullName>Uncharacterized protein ORF53b</fullName>
    </recommendedName>
</protein>
<accession>A4ZUA7</accession>
<organism>
    <name type="scientific">Acidianus bottle-shaped virus (isolate Italy/Pozzuoli)</name>
    <name type="common">ABV</name>
    <dbReference type="NCBI Taxonomy" id="654911"/>
    <lineage>
        <taxon>Viruses</taxon>
        <taxon>Viruses incertae sedis</taxon>
        <taxon>Ampullaviridae</taxon>
        <taxon>Bottigliavirus</taxon>
        <taxon>Bottigliavirus ABV</taxon>
    </lineage>
</organism>
<sequence length="53" mass="6274">MENFILLIVGFIYGAGGVLLYSVYKEVREMKQIFEQILSQMQTKDYEETNDFM</sequence>
<proteinExistence type="predicted"/>
<organismHost>
    <name type="scientific">Acidianus convivator</name>
    <dbReference type="NCBI Taxonomy" id="269667"/>
</organismHost>
<reference key="1">
    <citation type="journal article" date="2007" name="Virology">
        <title>Genome of the Acidianus bottle-shaped virus and insights into the replication and packaging mechanisms.</title>
        <authorList>
            <person name="Peng X."/>
            <person name="Basta T."/>
            <person name="Haring M."/>
            <person name="Garrett R.A."/>
            <person name="Prangishvili D."/>
        </authorList>
    </citation>
    <scope>NUCLEOTIDE SEQUENCE [GENOMIC DNA]</scope>
</reference>
<evidence type="ECO:0000255" key="1"/>
<evidence type="ECO:0000305" key="2"/>
<gene>
    <name type="ORF">ORF53b</name>
</gene>
<dbReference type="EMBL" id="EF432053">
    <property type="protein sequence ID" value="ABP73411.1"/>
    <property type="molecule type" value="Genomic_DNA"/>
</dbReference>
<dbReference type="RefSeq" id="YP_001210325.1">
    <property type="nucleotide sequence ID" value="NC_009452.1"/>
</dbReference>
<dbReference type="GeneID" id="5129853"/>
<dbReference type="KEGG" id="vg:5129853"/>
<dbReference type="Proteomes" id="UP000000513">
    <property type="component" value="Segment"/>
</dbReference>
<dbReference type="GO" id="GO:0033644">
    <property type="term" value="C:host cell membrane"/>
    <property type="evidence" value="ECO:0007669"/>
    <property type="project" value="UniProtKB-SubCell"/>
</dbReference>
<dbReference type="GO" id="GO:0016020">
    <property type="term" value="C:membrane"/>
    <property type="evidence" value="ECO:0007669"/>
    <property type="project" value="UniProtKB-KW"/>
</dbReference>
<comment type="subcellular location">
    <subcellularLocation>
        <location evidence="2">Host membrane</location>
        <topology evidence="2">Single-pass membrane protein</topology>
    </subcellularLocation>
</comment>
<keyword id="KW-1043">Host membrane</keyword>
<keyword id="KW-0472">Membrane</keyword>
<keyword id="KW-1185">Reference proteome</keyword>
<keyword id="KW-0812">Transmembrane</keyword>
<keyword id="KW-1133">Transmembrane helix</keyword>